<protein>
    <recommendedName>
        <fullName>Ubiquitin-conjugating enzyme E2 variant 3</fullName>
        <shortName>UEV-3</shortName>
    </recommendedName>
    <alternativeName>
        <fullName>EV and lactate/malate dehydrogenase domain-containing protein</fullName>
    </alternativeName>
</protein>
<comment type="function">
    <text evidence="1">Possible negative regulator of polyubiquitination.</text>
</comment>
<comment type="subunit">
    <text evidence="1">Homodimer.</text>
</comment>
<comment type="similarity">
    <text evidence="3">In the N-terminal section; belongs to the ubiquitin-conjugating enzyme family. UEV subfamily.</text>
</comment>
<comment type="similarity">
    <text evidence="3">In the C-terminal section; belongs to the LDH/MDH superfamily.</text>
</comment>
<keyword id="KW-0520">NAD</keyword>
<keyword id="KW-1185">Reference proteome</keyword>
<keyword id="KW-0833">Ubl conjugation pathway</keyword>
<accession>Q6DBY5</accession>
<name>UEVLD_DANRE</name>
<gene>
    <name type="primary">uevld</name>
    <name type="synonym">uev3</name>
    <name type="ORF">zgc:100959</name>
</gene>
<organism>
    <name type="scientific">Danio rerio</name>
    <name type="common">Zebrafish</name>
    <name type="synonym">Brachydanio rerio</name>
    <dbReference type="NCBI Taxonomy" id="7955"/>
    <lineage>
        <taxon>Eukaryota</taxon>
        <taxon>Metazoa</taxon>
        <taxon>Chordata</taxon>
        <taxon>Craniata</taxon>
        <taxon>Vertebrata</taxon>
        <taxon>Euteleostomi</taxon>
        <taxon>Actinopterygii</taxon>
        <taxon>Neopterygii</taxon>
        <taxon>Teleostei</taxon>
        <taxon>Ostariophysi</taxon>
        <taxon>Cypriniformes</taxon>
        <taxon>Danionidae</taxon>
        <taxon>Danioninae</taxon>
        <taxon>Danio</taxon>
    </lineage>
</organism>
<evidence type="ECO:0000250" key="1"/>
<evidence type="ECO:0000255" key="2">
    <source>
        <dbReference type="PROSITE-ProRule" id="PRU00652"/>
    </source>
</evidence>
<evidence type="ECO:0000305" key="3"/>
<sequence length="471" mass="51264">MDVNSEPVKKVLSKYKFRDVAVEELQKVYRVYPDMKIMAGTYTSSDSLQKDLLKLVGNIPVVYQGRSYNIPILLWLLDSFPFTPPICYLRPTSSMVIREGKHVDSKGRIHLPALHNWDHPKSSVNALLAEMIGKFEEEPPLGTKSSAHGDTPSNLLDYVSNLTITEGGNRPDQEVKVSVIGGGDLGIAAVLSIMAKSCVDKLVLIDIPENSTKGGTMDLEIFSLPKVEVSKDLSASAGSKVLVITANAWSDEQSYLSVVQTNVDMYRGIIPRLAQLSPNAVLVIASQPVDVMTHVAWRQSHLLPTQVIGVGCNLDSQRLSHIINISLVANNTGKQAWVIGELSENKVAVWGNMGPGTDQLQALTPVSNSTKPLMDRAFEMIKGRGQRSWSVGLSIADITHSIVTNQKKVHSVTTLAEGWGGIGSKVFLSLPCILGETGSTRLPGVALGSEDEMKLRESVACQVNLFMQLRL</sequence>
<reference key="1">
    <citation type="submission" date="2004-07" db="EMBL/GenBank/DDBJ databases">
        <authorList>
            <consortium name="NIH - Zebrafish Gene Collection (ZGC) project"/>
        </authorList>
    </citation>
    <scope>NUCLEOTIDE SEQUENCE [LARGE SCALE MRNA]</scope>
    <source>
        <tissue>Embryo</tissue>
    </source>
</reference>
<proteinExistence type="evidence at transcript level"/>
<dbReference type="EMBL" id="BC078313">
    <property type="protein sequence ID" value="AAH78313.1"/>
    <property type="molecule type" value="mRNA"/>
</dbReference>
<dbReference type="RefSeq" id="NP_001003619.1">
    <property type="nucleotide sequence ID" value="NM_001003619.2"/>
</dbReference>
<dbReference type="SMR" id="Q6DBY5"/>
<dbReference type="FunCoup" id="Q6DBY5">
    <property type="interactions" value="39"/>
</dbReference>
<dbReference type="STRING" id="7955.ENSDARP00000048506"/>
<dbReference type="PaxDb" id="7955-ENSDARP00000048506"/>
<dbReference type="Ensembl" id="ENSDART00000048507">
    <property type="protein sequence ID" value="ENSDARP00000048506"/>
    <property type="gene ID" value="ENSDARG00000009266"/>
</dbReference>
<dbReference type="Ensembl" id="ENSDART00000189014">
    <property type="protein sequence ID" value="ENSDARP00000148667"/>
    <property type="gene ID" value="ENSDARG00000116754"/>
</dbReference>
<dbReference type="GeneID" id="445225"/>
<dbReference type="KEGG" id="dre:445225"/>
<dbReference type="AGR" id="ZFIN:ZDB-GENE-040801-138"/>
<dbReference type="CTD" id="55293"/>
<dbReference type="ZFIN" id="ZDB-GENE-040801-138">
    <property type="gene designation" value="uevld"/>
</dbReference>
<dbReference type="eggNOG" id="KOG1495">
    <property type="taxonomic scope" value="Eukaryota"/>
</dbReference>
<dbReference type="eggNOG" id="KOG2391">
    <property type="taxonomic scope" value="Eukaryota"/>
</dbReference>
<dbReference type="HOGENOM" id="CLU_039842_0_1_1"/>
<dbReference type="InParanoid" id="Q6DBY5"/>
<dbReference type="OMA" id="CIMGANG"/>
<dbReference type="OrthoDB" id="5405561at2759"/>
<dbReference type="PhylomeDB" id="Q6DBY5"/>
<dbReference type="TreeFam" id="TF314963"/>
<dbReference type="PRO" id="PR:Q6DBY5"/>
<dbReference type="Proteomes" id="UP000000437">
    <property type="component" value="Alternate scaffold 25"/>
</dbReference>
<dbReference type="Proteomes" id="UP000000437">
    <property type="component" value="Chromosome 25"/>
</dbReference>
<dbReference type="Bgee" id="ENSDARG00000009266">
    <property type="expression patterns" value="Expressed in early embryo and 24 other cell types or tissues"/>
</dbReference>
<dbReference type="GO" id="GO:0000813">
    <property type="term" value="C:ESCRT I complex"/>
    <property type="evidence" value="ECO:0000318"/>
    <property type="project" value="GO_Central"/>
</dbReference>
<dbReference type="GO" id="GO:0016616">
    <property type="term" value="F:oxidoreductase activity, acting on the CH-OH group of donors, NAD or NADP as acceptor"/>
    <property type="evidence" value="ECO:0007669"/>
    <property type="project" value="InterPro"/>
</dbReference>
<dbReference type="GO" id="GO:0043130">
    <property type="term" value="F:ubiquitin binding"/>
    <property type="evidence" value="ECO:0000318"/>
    <property type="project" value="GO_Central"/>
</dbReference>
<dbReference type="GO" id="GO:0019752">
    <property type="term" value="P:carboxylic acid metabolic process"/>
    <property type="evidence" value="ECO:0007669"/>
    <property type="project" value="InterPro"/>
</dbReference>
<dbReference type="GO" id="GO:0008333">
    <property type="term" value="P:endosome to lysosome transport"/>
    <property type="evidence" value="ECO:0000318"/>
    <property type="project" value="GO_Central"/>
</dbReference>
<dbReference type="GO" id="GO:0036211">
    <property type="term" value="P:protein modification process"/>
    <property type="evidence" value="ECO:0007669"/>
    <property type="project" value="InterPro"/>
</dbReference>
<dbReference type="GO" id="GO:0015031">
    <property type="term" value="P:protein transport"/>
    <property type="evidence" value="ECO:0007669"/>
    <property type="project" value="InterPro"/>
</dbReference>
<dbReference type="CDD" id="cd05293">
    <property type="entry name" value="LDH_1"/>
    <property type="match status" value="1"/>
</dbReference>
<dbReference type="CDD" id="cd11685">
    <property type="entry name" value="UEV_TSG101-like"/>
    <property type="match status" value="1"/>
</dbReference>
<dbReference type="Gene3D" id="3.90.110.10">
    <property type="entry name" value="Lactate dehydrogenase/glycoside hydrolase, family 4, C-terminal"/>
    <property type="match status" value="1"/>
</dbReference>
<dbReference type="Gene3D" id="3.40.50.720">
    <property type="entry name" value="NAD(P)-binding Rossmann-like Domain"/>
    <property type="match status" value="1"/>
</dbReference>
<dbReference type="Gene3D" id="3.10.110.10">
    <property type="entry name" value="Ubiquitin Conjugating Enzyme"/>
    <property type="match status" value="1"/>
</dbReference>
<dbReference type="InterPro" id="IPR001557">
    <property type="entry name" value="L-lactate/malate_DH"/>
</dbReference>
<dbReference type="InterPro" id="IPR022383">
    <property type="entry name" value="Lactate/malate_DH_C"/>
</dbReference>
<dbReference type="InterPro" id="IPR001236">
    <property type="entry name" value="Lactate/malate_DH_N"/>
</dbReference>
<dbReference type="InterPro" id="IPR015955">
    <property type="entry name" value="Lactate_DH/Glyco_Ohase_4_C"/>
</dbReference>
<dbReference type="InterPro" id="IPR036291">
    <property type="entry name" value="NAD(P)-bd_dom_sf"/>
</dbReference>
<dbReference type="InterPro" id="IPR016135">
    <property type="entry name" value="UBQ-conjugating_enzyme/RWD"/>
</dbReference>
<dbReference type="InterPro" id="IPR008883">
    <property type="entry name" value="UEV_N"/>
</dbReference>
<dbReference type="PANTHER" id="PTHR43128">
    <property type="entry name" value="L-2-HYDROXYCARBOXYLATE DEHYDROGENASE (NAD(P)(+))"/>
    <property type="match status" value="1"/>
</dbReference>
<dbReference type="PANTHER" id="PTHR43128:SF33">
    <property type="entry name" value="UBIQUITIN-CONJUGATING ENZYME E2 VARIANT 3"/>
    <property type="match status" value="1"/>
</dbReference>
<dbReference type="Pfam" id="PF02866">
    <property type="entry name" value="Ldh_1_C"/>
    <property type="match status" value="1"/>
</dbReference>
<dbReference type="Pfam" id="PF00056">
    <property type="entry name" value="Ldh_1_N"/>
    <property type="match status" value="1"/>
</dbReference>
<dbReference type="Pfam" id="PF05743">
    <property type="entry name" value="UEV"/>
    <property type="match status" value="1"/>
</dbReference>
<dbReference type="PRINTS" id="PR00086">
    <property type="entry name" value="LLDHDRGNASE"/>
</dbReference>
<dbReference type="SUPFAM" id="SSF56327">
    <property type="entry name" value="LDH C-terminal domain-like"/>
    <property type="match status" value="1"/>
</dbReference>
<dbReference type="SUPFAM" id="SSF51735">
    <property type="entry name" value="NAD(P)-binding Rossmann-fold domains"/>
    <property type="match status" value="1"/>
</dbReference>
<dbReference type="SUPFAM" id="SSF54495">
    <property type="entry name" value="UBC-like"/>
    <property type="match status" value="1"/>
</dbReference>
<dbReference type="PROSITE" id="PS51322">
    <property type="entry name" value="UEV"/>
    <property type="match status" value="1"/>
</dbReference>
<feature type="chain" id="PRO_0000278653" description="Ubiquitin-conjugating enzyme E2 variant 3">
    <location>
        <begin position="1"/>
        <end position="471"/>
    </location>
</feature>
<feature type="domain" description="UEV" evidence="2">
    <location>
        <begin position="2"/>
        <end position="145"/>
    </location>
</feature>
<feature type="binding site" evidence="1">
    <location>
        <begin position="183"/>
        <end position="211"/>
    </location>
    <ligand>
        <name>NAD(+)</name>
        <dbReference type="ChEBI" id="CHEBI:57540"/>
    </ligand>
</feature>